<organism>
    <name type="scientific">Gallus gallus</name>
    <name type="common">Chicken</name>
    <dbReference type="NCBI Taxonomy" id="9031"/>
    <lineage>
        <taxon>Eukaryota</taxon>
        <taxon>Metazoa</taxon>
        <taxon>Chordata</taxon>
        <taxon>Craniata</taxon>
        <taxon>Vertebrata</taxon>
        <taxon>Euteleostomi</taxon>
        <taxon>Archelosauria</taxon>
        <taxon>Archosauria</taxon>
        <taxon>Dinosauria</taxon>
        <taxon>Saurischia</taxon>
        <taxon>Theropoda</taxon>
        <taxon>Coelurosauria</taxon>
        <taxon>Aves</taxon>
        <taxon>Neognathae</taxon>
        <taxon>Galloanserae</taxon>
        <taxon>Galliformes</taxon>
        <taxon>Phasianidae</taxon>
        <taxon>Phasianinae</taxon>
        <taxon>Gallus</taxon>
    </lineage>
</organism>
<accession>Q802A9</accession>
<feature type="signal peptide" evidence="2">
    <location>
        <begin position="1"/>
        <end position="19"/>
    </location>
</feature>
<feature type="chain" id="PRO_0000245861" description="Fibroblast growth factor-binding protein 2">
    <location>
        <begin position="20"/>
        <end position="208"/>
    </location>
</feature>
<feature type="region of interest" description="Disordered" evidence="3">
    <location>
        <begin position="130"/>
        <end position="181"/>
    </location>
</feature>
<feature type="disulfide bond" evidence="1">
    <location>
        <begin position="43"/>
        <end position="59"/>
    </location>
</feature>
<feature type="disulfide bond" evidence="1">
    <location>
        <begin position="68"/>
        <end position="102"/>
    </location>
</feature>
<feature type="disulfide bond" evidence="1">
    <location>
        <begin position="77"/>
        <end position="113"/>
    </location>
</feature>
<feature type="disulfide bond" evidence="1">
    <location>
        <begin position="191"/>
        <end position="199"/>
    </location>
</feature>
<gene>
    <name type="primary">FGFBP2</name>
</gene>
<proteinExistence type="evidence at transcript level"/>
<keyword id="KW-1015">Disulfide bond</keyword>
<keyword id="KW-0340">Growth factor binding</keyword>
<keyword id="KW-1185">Reference proteome</keyword>
<keyword id="KW-0964">Secreted</keyword>
<keyword id="KW-0732">Signal</keyword>
<dbReference type="EMBL" id="AY164487">
    <property type="protein sequence ID" value="AAO23116.1"/>
    <property type="molecule type" value="mRNA"/>
</dbReference>
<dbReference type="RefSeq" id="NP_989778.1">
    <property type="nucleotide sequence ID" value="NM_204447.2"/>
</dbReference>
<dbReference type="DIP" id="DIP-58560N"/>
<dbReference type="FunCoup" id="Q802A9">
    <property type="interactions" value="5"/>
</dbReference>
<dbReference type="IntAct" id="Q802A9">
    <property type="interactions" value="1"/>
</dbReference>
<dbReference type="STRING" id="9031.ENSGALP00000023367"/>
<dbReference type="PaxDb" id="9031-ENSGALP00000023367"/>
<dbReference type="Ensembl" id="ENSGALT00010025022.1">
    <property type="protein sequence ID" value="ENSGALP00010014224.1"/>
    <property type="gene ID" value="ENSGALG00010010467.1"/>
</dbReference>
<dbReference type="GeneID" id="395094"/>
<dbReference type="KEGG" id="gga:395094"/>
<dbReference type="CTD" id="83888"/>
<dbReference type="VEuPathDB" id="HostDB:geneid_395094"/>
<dbReference type="eggNOG" id="ENOG502S0EZ">
    <property type="taxonomic scope" value="Eukaryota"/>
</dbReference>
<dbReference type="GeneTree" id="ENSGT00940000154372"/>
<dbReference type="HOGENOM" id="CLU_086542_0_0_1"/>
<dbReference type="InParanoid" id="Q802A9"/>
<dbReference type="OMA" id="QGKSYWC"/>
<dbReference type="OrthoDB" id="8941648at2759"/>
<dbReference type="PhylomeDB" id="Q802A9"/>
<dbReference type="TreeFam" id="TF335877"/>
<dbReference type="PRO" id="PR:Q802A9"/>
<dbReference type="Proteomes" id="UP000000539">
    <property type="component" value="Chromosome 4"/>
</dbReference>
<dbReference type="Bgee" id="ENSGALG00000014501">
    <property type="expression patterns" value="Expressed in cerebellum and 6 other cell types or tissues"/>
</dbReference>
<dbReference type="GO" id="GO:0005576">
    <property type="term" value="C:extracellular region"/>
    <property type="evidence" value="ECO:0007669"/>
    <property type="project" value="UniProtKB-SubCell"/>
</dbReference>
<dbReference type="GO" id="GO:0019838">
    <property type="term" value="F:growth factor binding"/>
    <property type="evidence" value="ECO:0000318"/>
    <property type="project" value="GO_Central"/>
</dbReference>
<dbReference type="GO" id="GO:0007267">
    <property type="term" value="P:cell-cell signaling"/>
    <property type="evidence" value="ECO:0000318"/>
    <property type="project" value="GO_Central"/>
</dbReference>
<dbReference type="InterPro" id="IPR010510">
    <property type="entry name" value="FGF1-bd"/>
</dbReference>
<dbReference type="PANTHER" id="PTHR15258">
    <property type="entry name" value="FGF BINDING PROTEIN-RELATED"/>
    <property type="match status" value="1"/>
</dbReference>
<dbReference type="PANTHER" id="PTHR15258:SF1">
    <property type="entry name" value="FIBROBLAST GROWTH FACTOR-BINDING PROTEIN 2"/>
    <property type="match status" value="1"/>
</dbReference>
<dbReference type="Pfam" id="PF06473">
    <property type="entry name" value="FGF-BP1"/>
    <property type="match status" value="1"/>
</dbReference>
<reference key="1">
    <citation type="submission" date="2002-10" db="EMBL/GenBank/DDBJ databases">
        <title>A chicken fibroblast growth factor binding protein in embryo development revealed by RNA interference.</title>
        <authorList>
            <person name="McDonnell K."/>
            <person name="Wellstein A."/>
        </authorList>
    </citation>
    <scope>NUCLEOTIDE SEQUENCE [MRNA]</scope>
</reference>
<evidence type="ECO:0000250" key="1"/>
<evidence type="ECO:0000255" key="2"/>
<evidence type="ECO:0000256" key="3">
    <source>
        <dbReference type="SAM" id="MobiDB-lite"/>
    </source>
</evidence>
<evidence type="ECO:0000305" key="4"/>
<comment type="subcellular location">
    <subcellularLocation>
        <location evidence="1">Secreted</location>
        <location evidence="1">Extracellular space</location>
    </subcellularLocation>
</comment>
<comment type="similarity">
    <text evidence="4">Belongs to the fibroblast growth factor-binding protein family.</text>
</comment>
<name>FGFP2_CHICK</name>
<protein>
    <recommendedName>
        <fullName>Fibroblast growth factor-binding protein 2</fullName>
        <shortName>FGF-BP2</shortName>
        <shortName>FGF-binding protein 2</shortName>
        <shortName>FGFBP-2</shortName>
    </recommendedName>
</protein>
<sequence>MKRVALLFLVVICGMGGLGQKLKPKKRSNGEEINFRTKTKDVCTMRISGDEEMKARIECKGQGKSYWCEYTGMPLLCHPFQNNPKMYWNQITMELRKLPHACESTQMLKASMCQKAPVDALMKQVAAGVEPEDGANRDKSSQKTSASVRGAGKSSVKKTGKPAVLPRIKPTQHGQGSENETEAMKLAREHCWESLHEFCSYIIGFFRG</sequence>